<reference evidence="8" key="1">
    <citation type="journal article" date="2001" name="Blood">
        <title>DUB-2A, a new member of the DUB subfamily of hematopoietic deubiquitinating enzymes.</title>
        <authorList>
            <person name="Baek K.H."/>
            <person name="Mondoux M.A."/>
            <person name="Jaster R."/>
            <person name="Fire-Levin E."/>
            <person name="D'Andrea A.D."/>
        </authorList>
    </citation>
    <scope>NUCLEOTIDE SEQUENCE [GENOMIC DNA / MRNA]</scope>
    <scope>FUNCTION</scope>
    <scope>CATALYTIC ACTIVITY</scope>
    <scope>TISSUE SPECIFICITY</scope>
    <scope>ACTIVE SITE</scope>
    <scope>MUTAGENESIS OF CYS-60</scope>
    <source>
        <strain evidence="9">129</strain>
        <strain evidence="8">129/W</strain>
    </source>
</reference>
<reference evidence="12" key="2">
    <citation type="journal article" date="2009" name="PLoS Biol.">
        <title>Lineage-specific biology revealed by a finished genome assembly of the mouse.</title>
        <authorList>
            <person name="Church D.M."/>
            <person name="Goodstadt L."/>
            <person name="Hillier L.W."/>
            <person name="Zody M.C."/>
            <person name="Goldstein S."/>
            <person name="She X."/>
            <person name="Bult C.J."/>
            <person name="Agarwala R."/>
            <person name="Cherry J.L."/>
            <person name="DiCuccio M."/>
            <person name="Hlavina W."/>
            <person name="Kapustin Y."/>
            <person name="Meric P."/>
            <person name="Maglott D."/>
            <person name="Birtle Z."/>
            <person name="Marques A.C."/>
            <person name="Graves T."/>
            <person name="Zhou S."/>
            <person name="Teague B."/>
            <person name="Potamousis K."/>
            <person name="Churas C."/>
            <person name="Place M."/>
            <person name="Herschleb J."/>
            <person name="Runnheim R."/>
            <person name="Forrest D."/>
            <person name="Amos-Landgraf J."/>
            <person name="Schwartz D.C."/>
            <person name="Cheng Z."/>
            <person name="Lindblad-Toh K."/>
            <person name="Eichler E.E."/>
            <person name="Ponting C.P."/>
        </authorList>
    </citation>
    <scope>NUCLEOTIDE SEQUENCE [LARGE SCALE GENOMIC DNA]</scope>
    <source>
        <strain evidence="12">C57BL/6J</strain>
    </source>
</reference>
<reference evidence="10" key="3">
    <citation type="submission" date="2005-07" db="EMBL/GenBank/DDBJ databases">
        <authorList>
            <person name="Mural R.J."/>
            <person name="Adams M.D."/>
            <person name="Myers E.W."/>
            <person name="Smith H.O."/>
            <person name="Venter J.C."/>
        </authorList>
    </citation>
    <scope>NUCLEOTIDE SEQUENCE [LARGE SCALE GENOMIC DNA]</scope>
</reference>
<keyword id="KW-0256">Endoplasmic reticulum</keyword>
<keyword id="KW-0378">Hydrolase</keyword>
<keyword id="KW-0539">Nucleus</keyword>
<keyword id="KW-0645">Protease</keyword>
<keyword id="KW-1185">Reference proteome</keyword>
<keyword id="KW-0788">Thiol protease</keyword>
<keyword id="KW-0833">Ubl conjugation pathway</keyword>
<protein>
    <recommendedName>
        <fullName evidence="6">Ubiquitin carboxyl-terminal hydrolase 17-like protein D</fullName>
        <ecNumber evidence="4">3.4.19.12</ecNumber>
    </recommendedName>
    <alternativeName>
        <fullName evidence="5">Deubiquitinating enzyme 2A</fullName>
    </alternativeName>
</protein>
<organism evidence="12">
    <name type="scientific">Mus musculus</name>
    <name type="common">Mouse</name>
    <dbReference type="NCBI Taxonomy" id="10090"/>
    <lineage>
        <taxon>Eukaryota</taxon>
        <taxon>Metazoa</taxon>
        <taxon>Chordata</taxon>
        <taxon>Craniata</taxon>
        <taxon>Vertebrata</taxon>
        <taxon>Euteleostomi</taxon>
        <taxon>Mammalia</taxon>
        <taxon>Eutheria</taxon>
        <taxon>Euarchontoglires</taxon>
        <taxon>Glires</taxon>
        <taxon>Rodentia</taxon>
        <taxon>Myomorpha</taxon>
        <taxon>Muroidea</taxon>
        <taxon>Muridae</taxon>
        <taxon>Murinae</taxon>
        <taxon>Mus</taxon>
        <taxon>Mus</taxon>
    </lineage>
</organism>
<comment type="function">
    <text evidence="4">Deubiquitinating enzyme that removes conjugated ubiquitin from specific proteins to regulate different cellular processes that may include cell proliferation, progression through the cell cycle, apoptosis, cell migration, and the cellular response to viral infection.</text>
</comment>
<comment type="catalytic activity">
    <reaction evidence="4">
        <text>Thiol-dependent hydrolysis of ester, thioester, amide, peptide and isopeptide bonds formed by the C-terminal Gly of ubiquitin (a 76-residue protein attached to proteins as an intracellular targeting signal).</text>
        <dbReference type="EC" id="3.4.19.12"/>
    </reaction>
</comment>
<comment type="subcellular location">
    <subcellularLocation>
        <location evidence="1">Nucleus</location>
    </subcellularLocation>
    <subcellularLocation>
        <location evidence="1">Endoplasmic reticulum</location>
    </subcellularLocation>
</comment>
<comment type="tissue specificity">
    <text evidence="4">Detected in T-cell, myeloid, and embryonic stem cell lines.</text>
</comment>
<comment type="similarity">
    <text evidence="6">Belongs to the peptidase C19 family. USP17 subfamily.</text>
</comment>
<proteinExistence type="evidence at protein level"/>
<accession>G5E8G2</accession>
<accession>Q923V2</accession>
<accession>Q923V3</accession>
<feature type="chain" id="PRO_0000438105" description="Ubiquitin carboxyl-terminal hydrolase 17-like protein D">
    <location>
        <begin position="1"/>
        <end position="545"/>
    </location>
</feature>
<feature type="domain" description="USP" evidence="2">
    <location>
        <begin position="51"/>
        <end position="348"/>
    </location>
</feature>
<feature type="region of interest" description="Disordered" evidence="3">
    <location>
        <begin position="367"/>
        <end position="443"/>
    </location>
</feature>
<feature type="region of interest" description="Disordered" evidence="3">
    <location>
        <begin position="521"/>
        <end position="545"/>
    </location>
</feature>
<feature type="compositionally biased region" description="Basic residues" evidence="3">
    <location>
        <begin position="374"/>
        <end position="385"/>
    </location>
</feature>
<feature type="compositionally biased region" description="Basic and acidic residues" evidence="3">
    <location>
        <begin position="393"/>
        <end position="404"/>
    </location>
</feature>
<feature type="compositionally biased region" description="Basic residues" evidence="3">
    <location>
        <begin position="524"/>
        <end position="537"/>
    </location>
</feature>
<feature type="active site" description="Nucleophile" evidence="2 7">
    <location>
        <position position="60"/>
    </location>
</feature>
<feature type="active site" description="Proton acceptor" evidence="2">
    <location>
        <position position="307"/>
    </location>
</feature>
<feature type="mutagenesis site" description="Loss of deubiquitinating activity." evidence="4">
    <original>C</original>
    <variation>S</variation>
    <location>
        <position position="60"/>
    </location>
</feature>
<feature type="sequence conflict" description="In Ref. 1; AAK84135." evidence="6" ref="1">
    <original>F</original>
    <variation>S</variation>
    <location>
        <position position="259"/>
    </location>
</feature>
<feature type="sequence conflict" description="In Ref. 1; AAK84135." evidence="6" ref="1">
    <original>V</original>
    <variation>C</variation>
    <location>
        <position position="354"/>
    </location>
</feature>
<feature type="sequence conflict" description="In Ref. 1; AAK84135." evidence="6" ref="1">
    <original>L</original>
    <variation>S</variation>
    <location>
        <position position="473"/>
    </location>
</feature>
<feature type="sequence conflict" description="In Ref. 1; AAK77003/AAK84135." evidence="6" ref="1">
    <original>Q</original>
    <variation>L</variation>
    <location>
        <position position="518"/>
    </location>
</feature>
<feature type="sequence conflict" description="In Ref. 1; AAK84135." evidence="6" ref="1">
    <original>K</original>
    <variation>N</variation>
    <location>
        <position position="536"/>
    </location>
</feature>
<gene>
    <name evidence="11" type="primary">Usp17ld</name>
    <name evidence="5 11" type="synonym">Dub2a</name>
</gene>
<evidence type="ECO:0000250" key="1">
    <source>
        <dbReference type="UniProtKB" id="Q6R6M4"/>
    </source>
</evidence>
<evidence type="ECO:0000255" key="2">
    <source>
        <dbReference type="PROSITE-ProRule" id="PRU01035"/>
    </source>
</evidence>
<evidence type="ECO:0000256" key="3">
    <source>
        <dbReference type="SAM" id="MobiDB-lite"/>
    </source>
</evidence>
<evidence type="ECO:0000269" key="4">
    <source>
    </source>
</evidence>
<evidence type="ECO:0000303" key="5">
    <source>
    </source>
</evidence>
<evidence type="ECO:0000305" key="6"/>
<evidence type="ECO:0000305" key="7">
    <source>
    </source>
</evidence>
<evidence type="ECO:0000312" key="8">
    <source>
        <dbReference type="EMBL" id="AAK77003.1"/>
    </source>
</evidence>
<evidence type="ECO:0000312" key="9">
    <source>
        <dbReference type="EMBL" id="AAK84135.1"/>
    </source>
</evidence>
<evidence type="ECO:0000312" key="10">
    <source>
        <dbReference type="EMBL" id="EDL16653.1"/>
    </source>
</evidence>
<evidence type="ECO:0000312" key="11">
    <source>
        <dbReference type="MGI" id="MGI:3051372"/>
    </source>
</evidence>
<evidence type="ECO:0000312" key="12">
    <source>
        <dbReference type="Proteomes" id="UP000000589"/>
    </source>
</evidence>
<sequence length="545" mass="61450">MVVSLSFPEADPALSSPGAQQLHQDEAQVVVELTANDKPSLSWECPQGPGCGLQNTGNSCYLNAALQCLTHTPPLADYMLSQEYSQTCCSPEGCKMCAMEAHVTQSLLHSHSGDVMKPSQILTSAFHKHQQEDAHEFLMFTLETMHESCLQVHRQSEPTSEDSSPIHDIFGGLWRSQIKCLHCQGTSDTYDRFLDVPLDISSAQSVNQALWDTEKSEELRGENAYYCGRCRQKMPASKTLHIHSAPKVLLLVLKRFSAFMGNKLDRKVSYPEFLDLKPYLSQPTGGPLPYALYAVLVHEGATCHSGHYFSYVKAGHGKWYKMDDTKVTSCDVTSVLNENAYVLFYVQQTDLKEVSIDMPEGRIHEVLDPEYQLKKSRRKKHKKKSPCTEDVGEPSKNREKKATKETSLGEGKVLQEKNHKKAGQKHENTKLVPQEQNHQKLGQKHRNNEILPQEQNHQKTGQSLRNTEGELDLPADAIVIHLPRSIANWGRDTPDKVNQPWHNADRLLTSQDLVNTGQLCRQEGRRRSKKGKNKNKQGQKLLLVR</sequence>
<name>U17PD_MOUSE</name>
<dbReference type="EC" id="3.4.19.12" evidence="4"/>
<dbReference type="EMBL" id="AF393637">
    <property type="protein sequence ID" value="AAK84135.1"/>
    <property type="molecule type" value="Genomic_DNA"/>
</dbReference>
<dbReference type="EMBL" id="AF393638">
    <property type="protein sequence ID" value="AAK77003.1"/>
    <property type="molecule type" value="mRNA"/>
</dbReference>
<dbReference type="EMBL" id="AC108410">
    <property type="status" value="NOT_ANNOTATED_CDS"/>
    <property type="molecule type" value="Genomic_DNA"/>
</dbReference>
<dbReference type="EMBL" id="CH466531">
    <property type="protein sequence ID" value="EDL16653.1"/>
    <property type="molecule type" value="Genomic_DNA"/>
</dbReference>
<dbReference type="CCDS" id="CCDS21567.1"/>
<dbReference type="RefSeq" id="NP_001001559.2">
    <property type="nucleotide sequence ID" value="NM_001001559.2"/>
</dbReference>
<dbReference type="SMR" id="G5E8G2"/>
<dbReference type="FunCoup" id="G5E8G2">
    <property type="interactions" value="201"/>
</dbReference>
<dbReference type="STRING" id="10090.ENSMUSP00000073107"/>
<dbReference type="MEROPS" id="C19.032"/>
<dbReference type="MEROPS" id="C19.086"/>
<dbReference type="iPTMnet" id="G5E8G2"/>
<dbReference type="PhosphoSitePlus" id="G5E8G2"/>
<dbReference type="PaxDb" id="10090-ENSMUSP00000073107"/>
<dbReference type="DNASU" id="384701"/>
<dbReference type="Ensembl" id="ENSMUST00000073394.3">
    <property type="protein sequence ID" value="ENSMUSP00000073107.3"/>
    <property type="gene ID" value="ENSMUSG00000057321.3"/>
</dbReference>
<dbReference type="GeneID" id="384701"/>
<dbReference type="KEGG" id="mmu:384701"/>
<dbReference type="UCSC" id="uc009itk.1">
    <property type="organism name" value="mouse"/>
</dbReference>
<dbReference type="AGR" id="MGI:3051372"/>
<dbReference type="CTD" id="384701"/>
<dbReference type="MGI" id="MGI:3051372">
    <property type="gene designation" value="Usp17ld"/>
</dbReference>
<dbReference type="VEuPathDB" id="HostDB:ENSMUSG00000057321"/>
<dbReference type="eggNOG" id="KOG1865">
    <property type="taxonomic scope" value="Eukaryota"/>
</dbReference>
<dbReference type="GeneTree" id="ENSGT00940000162665"/>
<dbReference type="HOGENOM" id="CLU_008279_10_0_1"/>
<dbReference type="InParanoid" id="G5E8G2"/>
<dbReference type="OMA" id="IMLWRKG"/>
<dbReference type="OrthoDB" id="420187at2759"/>
<dbReference type="PhylomeDB" id="G5E8G2"/>
<dbReference type="TreeFam" id="TF315281"/>
<dbReference type="Reactome" id="R-MMU-5689880">
    <property type="pathway name" value="Ub-specific processing proteases"/>
</dbReference>
<dbReference type="Reactome" id="R-MMU-9648002">
    <property type="pathway name" value="RAS processing"/>
</dbReference>
<dbReference type="BioGRID-ORCS" id="384701">
    <property type="hits" value="1 hit in 56 CRISPR screens"/>
</dbReference>
<dbReference type="PRO" id="PR:G5E8G2"/>
<dbReference type="Proteomes" id="UP000000589">
    <property type="component" value="Chromosome 7"/>
</dbReference>
<dbReference type="RNAct" id="G5E8G2">
    <property type="molecule type" value="protein"/>
</dbReference>
<dbReference type="Bgee" id="ENSMUSG00000057321">
    <property type="expression patterns" value="Expressed in animal zygote and 2 other cell types or tissues"/>
</dbReference>
<dbReference type="GO" id="GO:0005783">
    <property type="term" value="C:endoplasmic reticulum"/>
    <property type="evidence" value="ECO:0007669"/>
    <property type="project" value="UniProtKB-SubCell"/>
</dbReference>
<dbReference type="GO" id="GO:0005634">
    <property type="term" value="C:nucleus"/>
    <property type="evidence" value="ECO:0007669"/>
    <property type="project" value="UniProtKB-SubCell"/>
</dbReference>
<dbReference type="GO" id="GO:0004843">
    <property type="term" value="F:cysteine-type deubiquitinase activity"/>
    <property type="evidence" value="ECO:0000314"/>
    <property type="project" value="MGI"/>
</dbReference>
<dbReference type="GO" id="GO:0016579">
    <property type="term" value="P:protein deubiquitination"/>
    <property type="evidence" value="ECO:0000305"/>
    <property type="project" value="MGI"/>
</dbReference>
<dbReference type="GO" id="GO:0006508">
    <property type="term" value="P:proteolysis"/>
    <property type="evidence" value="ECO:0007669"/>
    <property type="project" value="UniProtKB-KW"/>
</dbReference>
<dbReference type="CDD" id="cd02661">
    <property type="entry name" value="Peptidase_C19E"/>
    <property type="match status" value="1"/>
</dbReference>
<dbReference type="FunFam" id="3.90.70.10:FF:000197">
    <property type="entry name" value="Ubiquitin carboxyl-terminal hydrolase 17-like protein E"/>
    <property type="match status" value="1"/>
</dbReference>
<dbReference type="Gene3D" id="3.90.70.10">
    <property type="entry name" value="Cysteine proteinases"/>
    <property type="match status" value="1"/>
</dbReference>
<dbReference type="InterPro" id="IPR038765">
    <property type="entry name" value="Papain-like_cys_pep_sf"/>
</dbReference>
<dbReference type="InterPro" id="IPR050164">
    <property type="entry name" value="Peptidase_C19"/>
</dbReference>
<dbReference type="InterPro" id="IPR001394">
    <property type="entry name" value="Peptidase_C19_UCH"/>
</dbReference>
<dbReference type="InterPro" id="IPR018200">
    <property type="entry name" value="USP_CS"/>
</dbReference>
<dbReference type="InterPro" id="IPR028889">
    <property type="entry name" value="USP_dom"/>
</dbReference>
<dbReference type="PANTHER" id="PTHR24006:SF651">
    <property type="entry name" value="INACTIVE UBIQUITIN CARBOXYL-TERMINAL HYDROLASE 17-LIKE PROTEIN 4-RELATED"/>
    <property type="match status" value="1"/>
</dbReference>
<dbReference type="PANTHER" id="PTHR24006">
    <property type="entry name" value="UBIQUITIN CARBOXYL-TERMINAL HYDROLASE"/>
    <property type="match status" value="1"/>
</dbReference>
<dbReference type="Pfam" id="PF00443">
    <property type="entry name" value="UCH"/>
    <property type="match status" value="1"/>
</dbReference>
<dbReference type="SUPFAM" id="SSF54001">
    <property type="entry name" value="Cysteine proteinases"/>
    <property type="match status" value="1"/>
</dbReference>
<dbReference type="PROSITE" id="PS00972">
    <property type="entry name" value="USP_1"/>
    <property type="match status" value="1"/>
</dbReference>
<dbReference type="PROSITE" id="PS00973">
    <property type="entry name" value="USP_2"/>
    <property type="match status" value="1"/>
</dbReference>
<dbReference type="PROSITE" id="PS50235">
    <property type="entry name" value="USP_3"/>
    <property type="match status" value="1"/>
</dbReference>